<feature type="chain" id="PRO_0000110675" description="Orotate phosphoribosyltransferase">
    <location>
        <begin position="1"/>
        <end position="224"/>
    </location>
</feature>
<feature type="binding site" description="in other chain" evidence="1">
    <location>
        <position position="29"/>
    </location>
    <ligand>
        <name>5-phospho-alpha-D-ribose 1-diphosphate</name>
        <dbReference type="ChEBI" id="CHEBI:58017"/>
        <note>ligand shared between dimeric partners</note>
    </ligand>
</feature>
<feature type="binding site" evidence="1">
    <location>
        <begin position="37"/>
        <end position="38"/>
    </location>
    <ligand>
        <name>orotate</name>
        <dbReference type="ChEBI" id="CHEBI:30839"/>
    </ligand>
</feature>
<feature type="binding site" description="in other chain" evidence="1">
    <location>
        <begin position="75"/>
        <end position="76"/>
    </location>
    <ligand>
        <name>5-phospho-alpha-D-ribose 1-diphosphate</name>
        <dbReference type="ChEBI" id="CHEBI:58017"/>
        <note>ligand shared between dimeric partners</note>
    </ligand>
</feature>
<feature type="binding site" evidence="1">
    <location>
        <position position="105"/>
    </location>
    <ligand>
        <name>5-phospho-alpha-D-ribose 1-diphosphate</name>
        <dbReference type="ChEBI" id="CHEBI:58017"/>
        <note>ligand shared between dimeric partners</note>
    </ligand>
</feature>
<feature type="binding site" description="in other chain" evidence="1">
    <location>
        <position position="106"/>
    </location>
    <ligand>
        <name>5-phospho-alpha-D-ribose 1-diphosphate</name>
        <dbReference type="ChEBI" id="CHEBI:58017"/>
        <note>ligand shared between dimeric partners</note>
    </ligand>
</feature>
<feature type="binding site" evidence="1">
    <location>
        <position position="109"/>
    </location>
    <ligand>
        <name>5-phospho-alpha-D-ribose 1-diphosphate</name>
        <dbReference type="ChEBI" id="CHEBI:58017"/>
        <note>ligand shared between dimeric partners</note>
    </ligand>
</feature>
<feature type="binding site" evidence="1">
    <location>
        <position position="111"/>
    </location>
    <ligand>
        <name>5-phospho-alpha-D-ribose 1-diphosphate</name>
        <dbReference type="ChEBI" id="CHEBI:58017"/>
        <note>ligand shared between dimeric partners</note>
    </ligand>
</feature>
<feature type="binding site" description="in other chain" evidence="1">
    <location>
        <begin position="130"/>
        <end position="138"/>
    </location>
    <ligand>
        <name>5-phospho-alpha-D-ribose 1-diphosphate</name>
        <dbReference type="ChEBI" id="CHEBI:58017"/>
        <note>ligand shared between dimeric partners</note>
    </ligand>
</feature>
<feature type="binding site" evidence="1">
    <location>
        <position position="134"/>
    </location>
    <ligand>
        <name>orotate</name>
        <dbReference type="ChEBI" id="CHEBI:30839"/>
    </ligand>
</feature>
<feature type="binding site" evidence="1">
    <location>
        <position position="162"/>
    </location>
    <ligand>
        <name>orotate</name>
        <dbReference type="ChEBI" id="CHEBI:30839"/>
    </ligand>
</feature>
<evidence type="ECO:0000255" key="1">
    <source>
        <dbReference type="HAMAP-Rule" id="MF_01208"/>
    </source>
</evidence>
<evidence type="ECO:0000305" key="2"/>
<organism>
    <name type="scientific">Bordetella bronchiseptica (strain ATCC BAA-588 / NCTC 13252 / RB50)</name>
    <name type="common">Alcaligenes bronchisepticus</name>
    <dbReference type="NCBI Taxonomy" id="257310"/>
    <lineage>
        <taxon>Bacteria</taxon>
        <taxon>Pseudomonadati</taxon>
        <taxon>Pseudomonadota</taxon>
        <taxon>Betaproteobacteria</taxon>
        <taxon>Burkholderiales</taxon>
        <taxon>Alcaligenaceae</taxon>
        <taxon>Bordetella</taxon>
    </lineage>
</organism>
<protein>
    <recommendedName>
        <fullName evidence="1">Orotate phosphoribosyltransferase</fullName>
        <shortName evidence="1">OPRT</shortName>
        <shortName evidence="1">OPRTase</shortName>
        <ecNumber evidence="1">2.4.2.10</ecNumber>
    </recommendedName>
</protein>
<dbReference type="EC" id="2.4.2.10" evidence="1"/>
<dbReference type="EMBL" id="BX640450">
    <property type="protein sequence ID" value="CAE34896.1"/>
    <property type="status" value="ALT_INIT"/>
    <property type="molecule type" value="Genomic_DNA"/>
</dbReference>
<dbReference type="RefSeq" id="WP_033448256.1">
    <property type="nucleotide sequence ID" value="NC_002927.3"/>
</dbReference>
<dbReference type="SMR" id="Q7WEU9"/>
<dbReference type="KEGG" id="bbr:BB4533"/>
<dbReference type="eggNOG" id="COG0461">
    <property type="taxonomic scope" value="Bacteria"/>
</dbReference>
<dbReference type="HOGENOM" id="CLU_074878_0_1_4"/>
<dbReference type="UniPathway" id="UPA00070">
    <property type="reaction ID" value="UER00119"/>
</dbReference>
<dbReference type="Proteomes" id="UP000001027">
    <property type="component" value="Chromosome"/>
</dbReference>
<dbReference type="GO" id="GO:0005737">
    <property type="term" value="C:cytoplasm"/>
    <property type="evidence" value="ECO:0007669"/>
    <property type="project" value="TreeGrafter"/>
</dbReference>
<dbReference type="GO" id="GO:0000287">
    <property type="term" value="F:magnesium ion binding"/>
    <property type="evidence" value="ECO:0007669"/>
    <property type="project" value="UniProtKB-UniRule"/>
</dbReference>
<dbReference type="GO" id="GO:0004588">
    <property type="term" value="F:orotate phosphoribosyltransferase activity"/>
    <property type="evidence" value="ECO:0007669"/>
    <property type="project" value="UniProtKB-UniRule"/>
</dbReference>
<dbReference type="GO" id="GO:0006207">
    <property type="term" value="P:'de novo' pyrimidine nucleobase biosynthetic process"/>
    <property type="evidence" value="ECO:0007669"/>
    <property type="project" value="TreeGrafter"/>
</dbReference>
<dbReference type="GO" id="GO:0044205">
    <property type="term" value="P:'de novo' UMP biosynthetic process"/>
    <property type="evidence" value="ECO:0007669"/>
    <property type="project" value="UniProtKB-UniRule"/>
</dbReference>
<dbReference type="GO" id="GO:0046132">
    <property type="term" value="P:pyrimidine ribonucleoside biosynthetic process"/>
    <property type="evidence" value="ECO:0007669"/>
    <property type="project" value="TreeGrafter"/>
</dbReference>
<dbReference type="CDD" id="cd06223">
    <property type="entry name" value="PRTases_typeI"/>
    <property type="match status" value="1"/>
</dbReference>
<dbReference type="FunFam" id="3.40.50.2020:FF:000008">
    <property type="entry name" value="Orotate phosphoribosyltransferase"/>
    <property type="match status" value="1"/>
</dbReference>
<dbReference type="Gene3D" id="3.40.50.2020">
    <property type="match status" value="1"/>
</dbReference>
<dbReference type="HAMAP" id="MF_01208">
    <property type="entry name" value="PyrE"/>
    <property type="match status" value="1"/>
</dbReference>
<dbReference type="InterPro" id="IPR023031">
    <property type="entry name" value="OPRT"/>
</dbReference>
<dbReference type="InterPro" id="IPR004467">
    <property type="entry name" value="Or_phspho_trans_dom"/>
</dbReference>
<dbReference type="InterPro" id="IPR000836">
    <property type="entry name" value="PRibTrfase_dom"/>
</dbReference>
<dbReference type="InterPro" id="IPR029057">
    <property type="entry name" value="PRTase-like"/>
</dbReference>
<dbReference type="NCBIfam" id="TIGR00336">
    <property type="entry name" value="pyrE"/>
    <property type="match status" value="1"/>
</dbReference>
<dbReference type="PANTHER" id="PTHR46683">
    <property type="entry name" value="OROTATE PHOSPHORIBOSYLTRANSFERASE 1-RELATED"/>
    <property type="match status" value="1"/>
</dbReference>
<dbReference type="PANTHER" id="PTHR46683:SF1">
    <property type="entry name" value="OROTATE PHOSPHORIBOSYLTRANSFERASE 1-RELATED"/>
    <property type="match status" value="1"/>
</dbReference>
<dbReference type="Pfam" id="PF00156">
    <property type="entry name" value="Pribosyltran"/>
    <property type="match status" value="1"/>
</dbReference>
<dbReference type="SUPFAM" id="SSF53271">
    <property type="entry name" value="PRTase-like"/>
    <property type="match status" value="1"/>
</dbReference>
<dbReference type="PROSITE" id="PS00103">
    <property type="entry name" value="PUR_PYR_PR_TRANSFER"/>
    <property type="match status" value="1"/>
</dbReference>
<sequence length="224" mass="23428">MSASASTAADFVRFALDEGVLRFGSFKVKSGRISPYFFNAGLFNSGRSVGALAGFYAQALVDSGVAFDMLFGPAYKGIPLATATSVALAGHRAMAGRDVPFAFNRKEAKDHGEGGTLVGAPLTGKVVIIDDVITAGTSVRESVEIIRAAGAEPAAVLIALDRMERAGPDDALSPHSAVQDVARTYGIPVVSIASLADIMTLLQDDAQFAEHREAVQAYRSKYGV</sequence>
<comment type="function">
    <text evidence="1">Catalyzes the transfer of a ribosyl phosphate group from 5-phosphoribose 1-diphosphate to orotate, leading to the formation of orotidine monophosphate (OMP).</text>
</comment>
<comment type="catalytic activity">
    <reaction evidence="1">
        <text>orotidine 5'-phosphate + diphosphate = orotate + 5-phospho-alpha-D-ribose 1-diphosphate</text>
        <dbReference type="Rhea" id="RHEA:10380"/>
        <dbReference type="ChEBI" id="CHEBI:30839"/>
        <dbReference type="ChEBI" id="CHEBI:33019"/>
        <dbReference type="ChEBI" id="CHEBI:57538"/>
        <dbReference type="ChEBI" id="CHEBI:58017"/>
        <dbReference type="EC" id="2.4.2.10"/>
    </reaction>
</comment>
<comment type="cofactor">
    <cofactor evidence="1">
        <name>Mg(2+)</name>
        <dbReference type="ChEBI" id="CHEBI:18420"/>
    </cofactor>
</comment>
<comment type="pathway">
    <text evidence="1">Pyrimidine metabolism; UMP biosynthesis via de novo pathway; UMP from orotate: step 1/2.</text>
</comment>
<comment type="subunit">
    <text evidence="1">Homodimer.</text>
</comment>
<comment type="similarity">
    <text evidence="1">Belongs to the purine/pyrimidine phosphoribosyltransferase family. PyrE subfamily.</text>
</comment>
<comment type="sequence caution" evidence="2">
    <conflict type="erroneous initiation">
        <sequence resource="EMBL-CDS" id="CAE34896"/>
    </conflict>
</comment>
<reference key="1">
    <citation type="journal article" date="2003" name="Nat. Genet.">
        <title>Comparative analysis of the genome sequences of Bordetella pertussis, Bordetella parapertussis and Bordetella bronchiseptica.</title>
        <authorList>
            <person name="Parkhill J."/>
            <person name="Sebaihia M."/>
            <person name="Preston A."/>
            <person name="Murphy L.D."/>
            <person name="Thomson N.R."/>
            <person name="Harris D.E."/>
            <person name="Holden M.T.G."/>
            <person name="Churcher C.M."/>
            <person name="Bentley S.D."/>
            <person name="Mungall K.L."/>
            <person name="Cerdeno-Tarraga A.-M."/>
            <person name="Temple L."/>
            <person name="James K.D."/>
            <person name="Harris B."/>
            <person name="Quail M.A."/>
            <person name="Achtman M."/>
            <person name="Atkin R."/>
            <person name="Baker S."/>
            <person name="Basham D."/>
            <person name="Bason N."/>
            <person name="Cherevach I."/>
            <person name="Chillingworth T."/>
            <person name="Collins M."/>
            <person name="Cronin A."/>
            <person name="Davis P."/>
            <person name="Doggett J."/>
            <person name="Feltwell T."/>
            <person name="Goble A."/>
            <person name="Hamlin N."/>
            <person name="Hauser H."/>
            <person name="Holroyd S."/>
            <person name="Jagels K."/>
            <person name="Leather S."/>
            <person name="Moule S."/>
            <person name="Norberczak H."/>
            <person name="O'Neil S."/>
            <person name="Ormond D."/>
            <person name="Price C."/>
            <person name="Rabbinowitsch E."/>
            <person name="Rutter S."/>
            <person name="Sanders M."/>
            <person name="Saunders D."/>
            <person name="Seeger K."/>
            <person name="Sharp S."/>
            <person name="Simmonds M."/>
            <person name="Skelton J."/>
            <person name="Squares R."/>
            <person name="Squares S."/>
            <person name="Stevens K."/>
            <person name="Unwin L."/>
            <person name="Whitehead S."/>
            <person name="Barrell B.G."/>
            <person name="Maskell D.J."/>
        </authorList>
    </citation>
    <scope>NUCLEOTIDE SEQUENCE [LARGE SCALE GENOMIC DNA]</scope>
    <source>
        <strain>ATCC BAA-588 / NCTC 13252 / RB50</strain>
    </source>
</reference>
<accession>Q7WEU9</accession>
<name>PYRE_BORBR</name>
<keyword id="KW-0328">Glycosyltransferase</keyword>
<keyword id="KW-0460">Magnesium</keyword>
<keyword id="KW-0665">Pyrimidine biosynthesis</keyword>
<keyword id="KW-0808">Transferase</keyword>
<gene>
    <name evidence="1" type="primary">pyrE</name>
    <name type="ordered locus">BB4533</name>
</gene>
<proteinExistence type="inferred from homology"/>